<dbReference type="EMBL" id="KJ412274">
    <property type="protein sequence ID" value="AHX39317.1"/>
    <property type="molecule type" value="Genomic_DNA"/>
</dbReference>
<dbReference type="PaxDb" id="4932-YIL115W-A"/>
<dbReference type="EnsemblFungi" id="YIL115W-A_mRNA">
    <property type="protein sequence ID" value="YIL115W-A"/>
    <property type="gene ID" value="YIL115W-A"/>
</dbReference>
<dbReference type="AGR" id="SGD:S000028795"/>
<dbReference type="SGD" id="S000028795">
    <property type="gene designation" value="YIL115W-A"/>
</dbReference>
<dbReference type="HOGENOM" id="CLU_2016515_0_0_1"/>
<comment type="miscellaneous">
    <text evidence="1">Partially overlaps NUP159.</text>
</comment>
<comment type="caution">
    <text evidence="2">Product of a dubious gene prediction unlikely to encode a functional protein. Because of that it is not part of the S.cerevisiae S288c complete/reference proteome set.</text>
</comment>
<proteinExistence type="uncertain"/>
<sequence length="123" mass="13917">MIEDEFIINGTNNVHIAKYHYFAMFKFLKKSPICFFVFMANPTSTTLNPFMSFVIEEDASNDEAFLPFSSNCNLLTCSRNNLISFSKPSRARDSLASFATNGLSSNLLFFTVNNFKMFSNSSV</sequence>
<organism>
    <name type="scientific">Saccharomyces cerevisiae (strain ATCC 204508 / S288c)</name>
    <name type="common">Baker's yeast</name>
    <dbReference type="NCBI Taxonomy" id="559292"/>
    <lineage>
        <taxon>Eukaryota</taxon>
        <taxon>Fungi</taxon>
        <taxon>Dikarya</taxon>
        <taxon>Ascomycota</taxon>
        <taxon>Saccharomycotina</taxon>
        <taxon>Saccharomycetes</taxon>
        <taxon>Saccharomycetales</taxon>
        <taxon>Saccharomycetaceae</taxon>
        <taxon>Saccharomyces</taxon>
    </lineage>
</organism>
<name>YI115_YEAST</name>
<accession>A0A023PZJ9</accession>
<reference key="1">
    <citation type="journal article" date="1997" name="Nature">
        <title>The nucleotide sequence of Saccharomyces cerevisiae chromosome IX.</title>
        <authorList>
            <person name="Churcher C.M."/>
            <person name="Bowman S."/>
            <person name="Badcock K."/>
            <person name="Bankier A.T."/>
            <person name="Brown D."/>
            <person name="Chillingworth T."/>
            <person name="Connor R."/>
            <person name="Devlin K."/>
            <person name="Gentles S."/>
            <person name="Hamlin N."/>
            <person name="Harris D.E."/>
            <person name="Horsnell T."/>
            <person name="Hunt S."/>
            <person name="Jagels K."/>
            <person name="Jones M."/>
            <person name="Lye G."/>
            <person name="Moule S."/>
            <person name="Odell C."/>
            <person name="Pearson D."/>
            <person name="Rajandream M.A."/>
            <person name="Rice P."/>
            <person name="Rowley N."/>
            <person name="Skelton J."/>
            <person name="Smith V."/>
            <person name="Walsh S.V."/>
            <person name="Whitehead S."/>
            <person name="Barrell B.G."/>
        </authorList>
    </citation>
    <scope>NUCLEOTIDE SEQUENCE [LARGE SCALE GENOMIC DNA]</scope>
    <source>
        <strain>ATCC 204508 / S288c</strain>
    </source>
</reference>
<reference key="2">
    <citation type="journal article" date="2014" name="G3 (Bethesda)">
        <title>The reference genome sequence of Saccharomyces cerevisiae: Then and now.</title>
        <authorList>
            <person name="Engel S.R."/>
            <person name="Dietrich F.S."/>
            <person name="Fisk D.G."/>
            <person name="Binkley G."/>
            <person name="Balakrishnan R."/>
            <person name="Costanzo M.C."/>
            <person name="Dwight S.S."/>
            <person name="Hitz B.C."/>
            <person name="Karra K."/>
            <person name="Nash R.S."/>
            <person name="Weng S."/>
            <person name="Wong E.D."/>
            <person name="Lloyd P."/>
            <person name="Skrzypek M.S."/>
            <person name="Miyasato S.R."/>
            <person name="Simison M."/>
            <person name="Cherry J.M."/>
        </authorList>
    </citation>
    <scope>GENOME REANNOTATION</scope>
    <source>
        <strain>ATCC 204508 / S288c</strain>
    </source>
</reference>
<gene>
    <name evidence="3" type="ordered locus">YIL115W-A</name>
</gene>
<evidence type="ECO:0000305" key="1"/>
<evidence type="ECO:0000305" key="2">
    <source>
    </source>
</evidence>
<evidence type="ECO:0000312" key="3">
    <source>
        <dbReference type="SGD" id="S000028795"/>
    </source>
</evidence>
<protein>
    <recommendedName>
        <fullName evidence="1">Putative uncharacterized protein YIL115W-A</fullName>
    </recommendedName>
</protein>
<feature type="chain" id="PRO_0000431038" description="Putative uncharacterized protein YIL115W-A">
    <location>
        <begin position="1"/>
        <end position="123"/>
    </location>
</feature>